<reference key="1">
    <citation type="journal article" date="2006" name="BMC Genomics">
        <title>Complete genome sequence of Shigella flexneri 5b and comparison with Shigella flexneri 2a.</title>
        <authorList>
            <person name="Nie H."/>
            <person name="Yang F."/>
            <person name="Zhang X."/>
            <person name="Yang J."/>
            <person name="Chen L."/>
            <person name="Wang J."/>
            <person name="Xiong Z."/>
            <person name="Peng J."/>
            <person name="Sun L."/>
            <person name="Dong J."/>
            <person name="Xue Y."/>
            <person name="Xu X."/>
            <person name="Chen S."/>
            <person name="Yao Z."/>
            <person name="Shen Y."/>
            <person name="Jin Q."/>
        </authorList>
    </citation>
    <scope>NUCLEOTIDE SEQUENCE [LARGE SCALE GENOMIC DNA]</scope>
    <source>
        <strain>8401</strain>
    </source>
</reference>
<feature type="chain" id="PRO_1000065789" description="Sigma factor-binding protein Crl">
    <location>
        <begin position="1"/>
        <end position="133"/>
    </location>
</feature>
<feature type="region of interest" description="Essential for activity" evidence="1">
    <location>
        <begin position="99"/>
        <end position="122"/>
    </location>
</feature>
<feature type="coiled-coil region" evidence="1">
    <location>
        <begin position="90"/>
        <end position="116"/>
    </location>
</feature>
<accession>Q0T7R1</accession>
<keyword id="KW-0010">Activator</keyword>
<keyword id="KW-0175">Coiled coil</keyword>
<keyword id="KW-0963">Cytoplasm</keyword>
<keyword id="KW-0804">Transcription</keyword>
<keyword id="KW-0805">Transcription regulation</keyword>
<gene>
    <name evidence="1" type="primary">crl</name>
    <name type="ordered locus">SFV_0290</name>
</gene>
<organism>
    <name type="scientific">Shigella flexneri serotype 5b (strain 8401)</name>
    <dbReference type="NCBI Taxonomy" id="373384"/>
    <lineage>
        <taxon>Bacteria</taxon>
        <taxon>Pseudomonadati</taxon>
        <taxon>Pseudomonadota</taxon>
        <taxon>Gammaproteobacteria</taxon>
        <taxon>Enterobacterales</taxon>
        <taxon>Enterobacteriaceae</taxon>
        <taxon>Shigella</taxon>
    </lineage>
</organism>
<comment type="function">
    <text evidence="1">Binds to the sigma-S subunit of RNA polymerase, activating expression of sigma-S-regulated genes. Stimulates RNA polymerase holoenzyme formation and may bind to several other sigma factors, such as sigma-70 and sigma-32.</text>
</comment>
<comment type="subcellular location">
    <subcellularLocation>
        <location evidence="1">Cytoplasm</location>
    </subcellularLocation>
</comment>
<comment type="similarity">
    <text evidence="1">Belongs to the Crl family.</text>
</comment>
<name>CRL_SHIF8</name>
<sequence>MTLPSGHPKSRLIKKFTALGPYIREGKCEDNRFFFDCLAVCVNVKPAPEVREFWGWWMELEAQESRFTYSYQFGLFDKAGDWKSVPVKDTEVVERLEHTLREFHEKLRELLTTLNLKLEPADDFRDEPVKLTA</sequence>
<dbReference type="EMBL" id="CP000266">
    <property type="protein sequence ID" value="ABF02565.1"/>
    <property type="molecule type" value="Genomic_DNA"/>
</dbReference>
<dbReference type="RefSeq" id="WP_000174677.1">
    <property type="nucleotide sequence ID" value="NC_008258.1"/>
</dbReference>
<dbReference type="SMR" id="Q0T7R1"/>
<dbReference type="GeneID" id="93777153"/>
<dbReference type="KEGG" id="sfv:SFV_0290"/>
<dbReference type="HOGENOM" id="CLU_136773_0_0_6"/>
<dbReference type="Proteomes" id="UP000000659">
    <property type="component" value="Chromosome"/>
</dbReference>
<dbReference type="GO" id="GO:0005737">
    <property type="term" value="C:cytoplasm"/>
    <property type="evidence" value="ECO:0007669"/>
    <property type="project" value="UniProtKB-SubCell"/>
</dbReference>
<dbReference type="GO" id="GO:0045893">
    <property type="term" value="P:positive regulation of DNA-templated transcription"/>
    <property type="evidence" value="ECO:0007669"/>
    <property type="project" value="UniProtKB-UniRule"/>
</dbReference>
<dbReference type="FunFam" id="3.30.310.230:FF:000001">
    <property type="entry name" value="Sigma factor-binding protein Crl"/>
    <property type="match status" value="1"/>
</dbReference>
<dbReference type="Gene3D" id="3.30.310.230">
    <property type="entry name" value="Sigma factor-binding protein Crl monomer"/>
    <property type="match status" value="1"/>
</dbReference>
<dbReference type="HAMAP" id="MF_01178">
    <property type="entry name" value="Crl"/>
    <property type="match status" value="1"/>
</dbReference>
<dbReference type="InterPro" id="IPR009986">
    <property type="entry name" value="Tscrpt_reg_Crl"/>
</dbReference>
<dbReference type="InterPro" id="IPR038208">
    <property type="entry name" value="Tscrpt_reg_Crl_sf"/>
</dbReference>
<dbReference type="NCBIfam" id="NF008217">
    <property type="entry name" value="PRK10984.1"/>
    <property type="match status" value="1"/>
</dbReference>
<dbReference type="Pfam" id="PF07417">
    <property type="entry name" value="Crl"/>
    <property type="match status" value="1"/>
</dbReference>
<evidence type="ECO:0000255" key="1">
    <source>
        <dbReference type="HAMAP-Rule" id="MF_01178"/>
    </source>
</evidence>
<proteinExistence type="inferred from homology"/>
<protein>
    <recommendedName>
        <fullName evidence="1">Sigma factor-binding protein Crl</fullName>
    </recommendedName>
</protein>